<proteinExistence type="inferred from homology"/>
<name>TRPB_LEPBJ</name>
<dbReference type="EC" id="4.2.1.20" evidence="1"/>
<dbReference type="EMBL" id="CP000350">
    <property type="protein sequence ID" value="ABJ75557.1"/>
    <property type="molecule type" value="Genomic_DNA"/>
</dbReference>
<dbReference type="RefSeq" id="WP_011669754.1">
    <property type="nucleotide sequence ID" value="NC_008510.1"/>
</dbReference>
<dbReference type="SMR" id="Q04U63"/>
<dbReference type="KEGG" id="lbj:LBJ_0913"/>
<dbReference type="HOGENOM" id="CLU_016734_3_1_12"/>
<dbReference type="UniPathway" id="UPA00035">
    <property type="reaction ID" value="UER00044"/>
</dbReference>
<dbReference type="Proteomes" id="UP000000656">
    <property type="component" value="Chromosome 1"/>
</dbReference>
<dbReference type="GO" id="GO:0005737">
    <property type="term" value="C:cytoplasm"/>
    <property type="evidence" value="ECO:0007669"/>
    <property type="project" value="TreeGrafter"/>
</dbReference>
<dbReference type="GO" id="GO:0004834">
    <property type="term" value="F:tryptophan synthase activity"/>
    <property type="evidence" value="ECO:0007669"/>
    <property type="project" value="UniProtKB-UniRule"/>
</dbReference>
<dbReference type="CDD" id="cd06446">
    <property type="entry name" value="Trp-synth_B"/>
    <property type="match status" value="1"/>
</dbReference>
<dbReference type="FunFam" id="3.40.50.1100:FF:000001">
    <property type="entry name" value="Tryptophan synthase beta chain"/>
    <property type="match status" value="1"/>
</dbReference>
<dbReference type="FunFam" id="3.40.50.1100:FF:000004">
    <property type="entry name" value="Tryptophan synthase beta chain"/>
    <property type="match status" value="1"/>
</dbReference>
<dbReference type="Gene3D" id="3.40.50.1100">
    <property type="match status" value="2"/>
</dbReference>
<dbReference type="HAMAP" id="MF_00133">
    <property type="entry name" value="Trp_synth_beta"/>
    <property type="match status" value="1"/>
</dbReference>
<dbReference type="InterPro" id="IPR006653">
    <property type="entry name" value="Trp_synth_b_CS"/>
</dbReference>
<dbReference type="InterPro" id="IPR006654">
    <property type="entry name" value="Trp_synth_beta"/>
</dbReference>
<dbReference type="InterPro" id="IPR023026">
    <property type="entry name" value="Trp_synth_beta/beta-like"/>
</dbReference>
<dbReference type="InterPro" id="IPR001926">
    <property type="entry name" value="TrpB-like_PALP"/>
</dbReference>
<dbReference type="InterPro" id="IPR036052">
    <property type="entry name" value="TrpB-like_PALP_sf"/>
</dbReference>
<dbReference type="NCBIfam" id="TIGR00263">
    <property type="entry name" value="trpB"/>
    <property type="match status" value="1"/>
</dbReference>
<dbReference type="PANTHER" id="PTHR48077:SF3">
    <property type="entry name" value="TRYPTOPHAN SYNTHASE"/>
    <property type="match status" value="1"/>
</dbReference>
<dbReference type="PANTHER" id="PTHR48077">
    <property type="entry name" value="TRYPTOPHAN SYNTHASE-RELATED"/>
    <property type="match status" value="1"/>
</dbReference>
<dbReference type="Pfam" id="PF00291">
    <property type="entry name" value="PALP"/>
    <property type="match status" value="1"/>
</dbReference>
<dbReference type="PIRSF" id="PIRSF001413">
    <property type="entry name" value="Trp_syn_beta"/>
    <property type="match status" value="1"/>
</dbReference>
<dbReference type="SUPFAM" id="SSF53686">
    <property type="entry name" value="Tryptophan synthase beta subunit-like PLP-dependent enzymes"/>
    <property type="match status" value="1"/>
</dbReference>
<dbReference type="PROSITE" id="PS00168">
    <property type="entry name" value="TRP_SYNTHASE_BETA"/>
    <property type="match status" value="1"/>
</dbReference>
<feature type="chain" id="PRO_1000018353" description="Tryptophan synthase beta chain">
    <location>
        <begin position="1"/>
        <end position="400"/>
    </location>
</feature>
<feature type="modified residue" description="N6-(pyridoxal phosphate)lysine" evidence="1">
    <location>
        <position position="92"/>
    </location>
</feature>
<evidence type="ECO:0000255" key="1">
    <source>
        <dbReference type="HAMAP-Rule" id="MF_00133"/>
    </source>
</evidence>
<accession>Q04U63</accession>
<protein>
    <recommendedName>
        <fullName evidence="1">Tryptophan synthase beta chain</fullName>
        <ecNumber evidence="1">4.2.1.20</ecNumber>
    </recommendedName>
</protein>
<keyword id="KW-0028">Amino-acid biosynthesis</keyword>
<keyword id="KW-0057">Aromatic amino acid biosynthesis</keyword>
<keyword id="KW-0456">Lyase</keyword>
<keyword id="KW-0663">Pyridoxal phosphate</keyword>
<keyword id="KW-0822">Tryptophan biosynthesis</keyword>
<sequence length="400" mass="43997">MGKVRHSPKEGYFGEFGGRYSPEILHDALAELETTYKKLKKNKHFKKELEYYRKNYIGRPSPLTYAERLTKVWDGARIWLKREDLNHTGAHKINNTIGQVLIAKAMGKTRIIAETGAGQHGVATATVGAMFQMETVVYMGEEDLRRQELNAIRMRMMGAKVVGVSSGTATLKDATSEAMRDWALNVSNTHYIVGSSIGPHPFPTIVRDFQSVIGIESRKQFKKVNGKLPNAVIACVGGGSNSIGMFYGFLRDKKVKLFGVEAGGYSTEPGHHSATIQFGRTGFLHGTKTLVIQDEFGQIVPAHSVSAGLDYPGVGPEHAYFHKSGRVTYVNVDDDGALDAFLEICQIEGIIPALETAHAFRFAKDLAKSMGKKEDILICLSGRGDKDVAEVARLRKGEFS</sequence>
<comment type="function">
    <text evidence="1">The beta subunit is responsible for the synthesis of L-tryptophan from indole and L-serine.</text>
</comment>
<comment type="catalytic activity">
    <reaction evidence="1">
        <text>(1S,2R)-1-C-(indol-3-yl)glycerol 3-phosphate + L-serine = D-glyceraldehyde 3-phosphate + L-tryptophan + H2O</text>
        <dbReference type="Rhea" id="RHEA:10532"/>
        <dbReference type="ChEBI" id="CHEBI:15377"/>
        <dbReference type="ChEBI" id="CHEBI:33384"/>
        <dbReference type="ChEBI" id="CHEBI:57912"/>
        <dbReference type="ChEBI" id="CHEBI:58866"/>
        <dbReference type="ChEBI" id="CHEBI:59776"/>
        <dbReference type="EC" id="4.2.1.20"/>
    </reaction>
</comment>
<comment type="cofactor">
    <cofactor evidence="1">
        <name>pyridoxal 5'-phosphate</name>
        <dbReference type="ChEBI" id="CHEBI:597326"/>
    </cofactor>
</comment>
<comment type="pathway">
    <text evidence="1">Amino-acid biosynthesis; L-tryptophan biosynthesis; L-tryptophan from chorismate: step 5/5.</text>
</comment>
<comment type="subunit">
    <text evidence="1">Tetramer of two alpha and two beta chains.</text>
</comment>
<comment type="similarity">
    <text evidence="1">Belongs to the TrpB family.</text>
</comment>
<organism>
    <name type="scientific">Leptospira borgpetersenii serovar Hardjo-bovis (strain JB197)</name>
    <dbReference type="NCBI Taxonomy" id="355277"/>
    <lineage>
        <taxon>Bacteria</taxon>
        <taxon>Pseudomonadati</taxon>
        <taxon>Spirochaetota</taxon>
        <taxon>Spirochaetia</taxon>
        <taxon>Leptospirales</taxon>
        <taxon>Leptospiraceae</taxon>
        <taxon>Leptospira</taxon>
    </lineage>
</organism>
<gene>
    <name evidence="1" type="primary">trpB</name>
    <name type="ordered locus">LBJ_0913</name>
</gene>
<reference key="1">
    <citation type="journal article" date="2006" name="Proc. Natl. Acad. Sci. U.S.A.">
        <title>Genome reduction in Leptospira borgpetersenii reflects limited transmission potential.</title>
        <authorList>
            <person name="Bulach D.M."/>
            <person name="Zuerner R.L."/>
            <person name="Wilson P."/>
            <person name="Seemann T."/>
            <person name="McGrath A."/>
            <person name="Cullen P.A."/>
            <person name="Davis J."/>
            <person name="Johnson M."/>
            <person name="Kuczek E."/>
            <person name="Alt D.P."/>
            <person name="Peterson-Burch B."/>
            <person name="Coppel R.L."/>
            <person name="Rood J.I."/>
            <person name="Davies J.K."/>
            <person name="Adler B."/>
        </authorList>
    </citation>
    <scope>NUCLEOTIDE SEQUENCE [LARGE SCALE GENOMIC DNA]</scope>
    <source>
        <strain>JB197</strain>
    </source>
</reference>